<proteinExistence type="inferred from homology"/>
<name>PYRH_FRATO</name>
<protein>
    <recommendedName>
        <fullName evidence="1">Uridylate kinase</fullName>
        <shortName evidence="1">UK</shortName>
        <ecNumber evidence="1">2.7.4.22</ecNumber>
    </recommendedName>
    <alternativeName>
        <fullName evidence="1">Uridine monophosphate kinase</fullName>
        <shortName evidence="1">UMP kinase</shortName>
        <shortName evidence="1">UMPK</shortName>
    </alternativeName>
</protein>
<gene>
    <name evidence="1" type="primary">pyrH</name>
    <name type="ordered locus">FTH_0221</name>
</gene>
<evidence type="ECO:0000255" key="1">
    <source>
        <dbReference type="HAMAP-Rule" id="MF_01220"/>
    </source>
</evidence>
<keyword id="KW-0067">ATP-binding</keyword>
<keyword id="KW-0963">Cytoplasm</keyword>
<keyword id="KW-0418">Kinase</keyword>
<keyword id="KW-0547">Nucleotide-binding</keyword>
<keyword id="KW-0665">Pyrimidine biosynthesis</keyword>
<keyword id="KW-0808">Transferase</keyword>
<dbReference type="EC" id="2.7.4.22" evidence="1"/>
<dbReference type="EMBL" id="CP000437">
    <property type="protein sequence ID" value="ABI82247.1"/>
    <property type="molecule type" value="Genomic_DNA"/>
</dbReference>
<dbReference type="RefSeq" id="WP_003014296.1">
    <property type="nucleotide sequence ID" value="NC_017463.1"/>
</dbReference>
<dbReference type="SMR" id="Q0BNT7"/>
<dbReference type="KEGG" id="fth:FTH_0221"/>
<dbReference type="UniPathway" id="UPA00159">
    <property type="reaction ID" value="UER00275"/>
</dbReference>
<dbReference type="GO" id="GO:0005737">
    <property type="term" value="C:cytoplasm"/>
    <property type="evidence" value="ECO:0007669"/>
    <property type="project" value="UniProtKB-SubCell"/>
</dbReference>
<dbReference type="GO" id="GO:0005524">
    <property type="term" value="F:ATP binding"/>
    <property type="evidence" value="ECO:0007669"/>
    <property type="project" value="UniProtKB-KW"/>
</dbReference>
<dbReference type="GO" id="GO:0033862">
    <property type="term" value="F:UMP kinase activity"/>
    <property type="evidence" value="ECO:0007669"/>
    <property type="project" value="UniProtKB-EC"/>
</dbReference>
<dbReference type="GO" id="GO:0044210">
    <property type="term" value="P:'de novo' CTP biosynthetic process"/>
    <property type="evidence" value="ECO:0007669"/>
    <property type="project" value="UniProtKB-UniRule"/>
</dbReference>
<dbReference type="GO" id="GO:0006225">
    <property type="term" value="P:UDP biosynthetic process"/>
    <property type="evidence" value="ECO:0007669"/>
    <property type="project" value="TreeGrafter"/>
</dbReference>
<dbReference type="CDD" id="cd04254">
    <property type="entry name" value="AAK_UMPK-PyrH-Ec"/>
    <property type="match status" value="1"/>
</dbReference>
<dbReference type="FunFam" id="3.40.1160.10:FF:000001">
    <property type="entry name" value="Uridylate kinase"/>
    <property type="match status" value="1"/>
</dbReference>
<dbReference type="Gene3D" id="3.40.1160.10">
    <property type="entry name" value="Acetylglutamate kinase-like"/>
    <property type="match status" value="1"/>
</dbReference>
<dbReference type="HAMAP" id="MF_01220_B">
    <property type="entry name" value="PyrH_B"/>
    <property type="match status" value="1"/>
</dbReference>
<dbReference type="InterPro" id="IPR036393">
    <property type="entry name" value="AceGlu_kinase-like_sf"/>
</dbReference>
<dbReference type="InterPro" id="IPR001048">
    <property type="entry name" value="Asp/Glu/Uridylate_kinase"/>
</dbReference>
<dbReference type="InterPro" id="IPR011817">
    <property type="entry name" value="Uridylate_kinase"/>
</dbReference>
<dbReference type="InterPro" id="IPR015963">
    <property type="entry name" value="Uridylate_kinase_bac"/>
</dbReference>
<dbReference type="NCBIfam" id="TIGR02075">
    <property type="entry name" value="pyrH_bact"/>
    <property type="match status" value="1"/>
</dbReference>
<dbReference type="PANTHER" id="PTHR42833">
    <property type="entry name" value="URIDYLATE KINASE"/>
    <property type="match status" value="1"/>
</dbReference>
<dbReference type="PANTHER" id="PTHR42833:SF4">
    <property type="entry name" value="URIDYLATE KINASE PUMPKIN, CHLOROPLASTIC"/>
    <property type="match status" value="1"/>
</dbReference>
<dbReference type="Pfam" id="PF00696">
    <property type="entry name" value="AA_kinase"/>
    <property type="match status" value="1"/>
</dbReference>
<dbReference type="PIRSF" id="PIRSF005650">
    <property type="entry name" value="Uridylate_kin"/>
    <property type="match status" value="1"/>
</dbReference>
<dbReference type="SUPFAM" id="SSF53633">
    <property type="entry name" value="Carbamate kinase-like"/>
    <property type="match status" value="1"/>
</dbReference>
<sequence>MSNDSSECSQKLPKLKRILLKLSGESLSADQGFGINVESAQPIINQIKTLTNFGVELALVVGGGNILRGGRANFGNKIRRATADSMGMIATMINALALRDMLISEGVDAEVFSAKGVDGLLKVASAHEFNQELAKGRVLIFAGGTGNPFVTTDTTASLRAVEIGADALLKATTVNGVYDKDPNKYSDAKRFDKVTFSEVVSKELNVMDLGAFTQCRDFSIPIYVFDLTQPNALVDAVLDSKYGTWVTLD</sequence>
<organism>
    <name type="scientific">Francisella tularensis subsp. holarctica (strain OSU18)</name>
    <dbReference type="NCBI Taxonomy" id="393011"/>
    <lineage>
        <taxon>Bacteria</taxon>
        <taxon>Pseudomonadati</taxon>
        <taxon>Pseudomonadota</taxon>
        <taxon>Gammaproteobacteria</taxon>
        <taxon>Thiotrichales</taxon>
        <taxon>Francisellaceae</taxon>
        <taxon>Francisella</taxon>
    </lineage>
</organism>
<comment type="function">
    <text evidence="1">Catalyzes the reversible phosphorylation of UMP to UDP.</text>
</comment>
<comment type="catalytic activity">
    <reaction evidence="1">
        <text>UMP + ATP = UDP + ADP</text>
        <dbReference type="Rhea" id="RHEA:24400"/>
        <dbReference type="ChEBI" id="CHEBI:30616"/>
        <dbReference type="ChEBI" id="CHEBI:57865"/>
        <dbReference type="ChEBI" id="CHEBI:58223"/>
        <dbReference type="ChEBI" id="CHEBI:456216"/>
        <dbReference type="EC" id="2.7.4.22"/>
    </reaction>
</comment>
<comment type="activity regulation">
    <text evidence="1">Inhibited by UTP.</text>
</comment>
<comment type="pathway">
    <text evidence="1">Pyrimidine metabolism; CTP biosynthesis via de novo pathway; UDP from UMP (UMPK route): step 1/1.</text>
</comment>
<comment type="subunit">
    <text evidence="1">Homohexamer.</text>
</comment>
<comment type="subcellular location">
    <subcellularLocation>
        <location evidence="1">Cytoplasm</location>
    </subcellularLocation>
</comment>
<comment type="similarity">
    <text evidence="1">Belongs to the UMP kinase family.</text>
</comment>
<accession>Q0BNT7</accession>
<reference key="1">
    <citation type="journal article" date="2006" name="J. Bacteriol.">
        <title>Chromosome rearrangement and diversification of Francisella tularensis revealed by the type B (OSU18) genome sequence.</title>
        <authorList>
            <person name="Petrosino J.F."/>
            <person name="Xiang Q."/>
            <person name="Karpathy S.E."/>
            <person name="Jiang H."/>
            <person name="Yerrapragada S."/>
            <person name="Liu Y."/>
            <person name="Gioia J."/>
            <person name="Hemphill L."/>
            <person name="Gonzalez A."/>
            <person name="Raghavan T.M."/>
            <person name="Uzman A."/>
            <person name="Fox G.E."/>
            <person name="Highlander S."/>
            <person name="Reichard M."/>
            <person name="Morton R.J."/>
            <person name="Clinkenbeard K.D."/>
            <person name="Weinstock G.M."/>
        </authorList>
    </citation>
    <scope>NUCLEOTIDE SEQUENCE [LARGE SCALE GENOMIC DNA]</scope>
    <source>
        <strain>OSU18</strain>
    </source>
</reference>
<feature type="chain" id="PRO_0000323850" description="Uridylate kinase">
    <location>
        <begin position="1"/>
        <end position="249"/>
    </location>
</feature>
<feature type="binding site" evidence="1">
    <location>
        <begin position="21"/>
        <end position="24"/>
    </location>
    <ligand>
        <name>ATP</name>
        <dbReference type="ChEBI" id="CHEBI:30616"/>
    </ligand>
</feature>
<feature type="binding site" evidence="1">
    <location>
        <position position="63"/>
    </location>
    <ligand>
        <name>UMP</name>
        <dbReference type="ChEBI" id="CHEBI:57865"/>
    </ligand>
</feature>
<feature type="binding site" evidence="1">
    <location>
        <position position="64"/>
    </location>
    <ligand>
        <name>ATP</name>
        <dbReference type="ChEBI" id="CHEBI:30616"/>
    </ligand>
</feature>
<feature type="binding site" evidence="1">
    <location>
        <position position="68"/>
    </location>
    <ligand>
        <name>ATP</name>
        <dbReference type="ChEBI" id="CHEBI:30616"/>
    </ligand>
</feature>
<feature type="binding site" evidence="1">
    <location>
        <position position="84"/>
    </location>
    <ligand>
        <name>UMP</name>
        <dbReference type="ChEBI" id="CHEBI:57865"/>
    </ligand>
</feature>
<feature type="binding site" evidence="1">
    <location>
        <begin position="145"/>
        <end position="152"/>
    </location>
    <ligand>
        <name>UMP</name>
        <dbReference type="ChEBI" id="CHEBI:57865"/>
    </ligand>
</feature>
<feature type="binding site" evidence="1">
    <location>
        <position position="172"/>
    </location>
    <ligand>
        <name>ATP</name>
        <dbReference type="ChEBI" id="CHEBI:30616"/>
    </ligand>
</feature>
<feature type="binding site" evidence="1">
    <location>
        <position position="178"/>
    </location>
    <ligand>
        <name>ATP</name>
        <dbReference type="ChEBI" id="CHEBI:30616"/>
    </ligand>
</feature>
<feature type="binding site" evidence="1">
    <location>
        <position position="181"/>
    </location>
    <ligand>
        <name>ATP</name>
        <dbReference type="ChEBI" id="CHEBI:30616"/>
    </ligand>
</feature>